<protein>
    <recommendedName>
        <fullName>Protein-tyrosine sulfotransferase 2</fullName>
        <ecNumber evidence="2">2.8.2.20</ecNumber>
    </recommendedName>
    <alternativeName>
        <fullName>Tyrosylprotein sulfotransferase 2</fullName>
        <shortName>TPST-2</shortName>
    </alternativeName>
</protein>
<gene>
    <name type="primary">TPST2</name>
    <name type="ORF">RCJMB04_17p1</name>
</gene>
<feature type="chain" id="PRO_0000253726" description="Protein-tyrosine sulfotransferase 2">
    <location>
        <begin position="1"/>
        <end position="371"/>
    </location>
</feature>
<feature type="topological domain" description="Cytoplasmic" evidence="3">
    <location>
        <begin position="1"/>
        <end position="8"/>
    </location>
</feature>
<feature type="transmembrane region" description="Helical; Signal-anchor for type II membrane protein" evidence="3">
    <location>
        <begin position="9"/>
        <end position="25"/>
    </location>
</feature>
<feature type="topological domain" description="Lumenal" evidence="3">
    <location>
        <begin position="26"/>
        <end position="371"/>
    </location>
</feature>
<feature type="region of interest" description="Interaction with peptide substrate" evidence="2">
    <location>
        <begin position="99"/>
        <end position="103"/>
    </location>
</feature>
<feature type="active site" description="Proton donor/acceptor" evidence="2">
    <location>
        <position position="97"/>
    </location>
</feature>
<feature type="binding site" evidence="2">
    <location>
        <begin position="76"/>
        <end position="80"/>
    </location>
    <ligand>
        <name>3'-phosphoadenylyl sulfate</name>
        <dbReference type="ChEBI" id="CHEBI:58339"/>
    </ligand>
</feature>
<feature type="binding site" evidence="2">
    <location>
        <position position="181"/>
    </location>
    <ligand>
        <name>3'-phosphoadenylyl sulfate</name>
        <dbReference type="ChEBI" id="CHEBI:58339"/>
    </ligand>
</feature>
<feature type="binding site" evidence="2">
    <location>
        <position position="189"/>
    </location>
    <ligand>
        <name>3'-phosphoadenylyl sulfate</name>
        <dbReference type="ChEBI" id="CHEBI:58339"/>
    </ligand>
</feature>
<feature type="binding site" evidence="2">
    <location>
        <position position="193"/>
    </location>
    <ligand>
        <name>3'-phosphoadenylyl sulfate</name>
        <dbReference type="ChEBI" id="CHEBI:58339"/>
    </ligand>
</feature>
<feature type="binding site" evidence="2">
    <location>
        <position position="236"/>
    </location>
    <ligand>
        <name>3'-phosphoadenylyl sulfate</name>
        <dbReference type="ChEBI" id="CHEBI:58339"/>
    </ligand>
</feature>
<feature type="binding site" evidence="2">
    <location>
        <begin position="283"/>
        <end position="292"/>
    </location>
    <ligand>
        <name>3'-phosphoadenylyl sulfate</name>
        <dbReference type="ChEBI" id="CHEBI:58339"/>
    </ligand>
</feature>
<feature type="binding site" evidence="2">
    <location>
        <position position="298"/>
    </location>
    <ligand>
        <name>3'-phosphoadenylyl sulfate</name>
        <dbReference type="ChEBI" id="CHEBI:58339"/>
    </ligand>
</feature>
<feature type="site" description="Transition state stabilizer" evidence="2">
    <location>
        <position position="156"/>
    </location>
</feature>
<feature type="site" description="Transition state stabilizer" evidence="2">
    <location>
        <position position="283"/>
    </location>
</feature>
<feature type="glycosylation site" description="N-linked (GlcNAc...) asparagine" evidence="3">
    <location>
        <position position="341"/>
    </location>
</feature>
<feature type="glycosylation site" description="N-linked (GlcNAc...) asparagine" evidence="3">
    <location>
        <position position="366"/>
    </location>
</feature>
<feature type="disulfide bond" evidence="2">
    <location>
        <begin position="94"/>
        <end position="154"/>
    </location>
</feature>
<feature type="disulfide bond" evidence="2">
    <location>
        <begin position="223"/>
        <end position="231"/>
    </location>
</feature>
<accession>Q5ZJI0</accession>
<proteinExistence type="evidence at transcript level"/>
<name>TPST2_CHICK</name>
<dbReference type="EC" id="2.8.2.20" evidence="2"/>
<dbReference type="EMBL" id="AJ720454">
    <property type="protein sequence ID" value="CAG32113.1"/>
    <property type="molecule type" value="mRNA"/>
</dbReference>
<dbReference type="RefSeq" id="NP_001012812.1">
    <property type="nucleotide sequence ID" value="NM_001012794.1"/>
</dbReference>
<dbReference type="SMR" id="Q5ZJI0"/>
<dbReference type="FunCoup" id="Q5ZJI0">
    <property type="interactions" value="4"/>
</dbReference>
<dbReference type="STRING" id="9031.ENSGALP00000009013"/>
<dbReference type="GlyCosmos" id="Q5ZJI0">
    <property type="glycosylation" value="2 sites, No reported glycans"/>
</dbReference>
<dbReference type="GlyGen" id="Q5ZJI0">
    <property type="glycosylation" value="2 sites"/>
</dbReference>
<dbReference type="PaxDb" id="9031-ENSGALP00000009013"/>
<dbReference type="GeneID" id="416910"/>
<dbReference type="KEGG" id="gga:416910"/>
<dbReference type="CTD" id="8459"/>
<dbReference type="VEuPathDB" id="HostDB:geneid_416910"/>
<dbReference type="eggNOG" id="KOG3988">
    <property type="taxonomic scope" value="Eukaryota"/>
</dbReference>
<dbReference type="InParanoid" id="Q5ZJI0"/>
<dbReference type="OrthoDB" id="545675at2759"/>
<dbReference type="PhylomeDB" id="Q5ZJI0"/>
<dbReference type="PRO" id="PR:Q5ZJI0"/>
<dbReference type="Proteomes" id="UP000000539">
    <property type="component" value="Unassembled WGS sequence"/>
</dbReference>
<dbReference type="GO" id="GO:0005794">
    <property type="term" value="C:Golgi apparatus"/>
    <property type="evidence" value="ECO:0000318"/>
    <property type="project" value="GO_Central"/>
</dbReference>
<dbReference type="GO" id="GO:0000139">
    <property type="term" value="C:Golgi membrane"/>
    <property type="evidence" value="ECO:0007669"/>
    <property type="project" value="UniProtKB-SubCell"/>
</dbReference>
<dbReference type="GO" id="GO:0008476">
    <property type="term" value="F:protein-tyrosine sulfotransferase activity"/>
    <property type="evidence" value="ECO:0000250"/>
    <property type="project" value="UniProtKB"/>
</dbReference>
<dbReference type="GO" id="GO:0006478">
    <property type="term" value="P:peptidyl-tyrosine sulfation"/>
    <property type="evidence" value="ECO:0000250"/>
    <property type="project" value="UniProtKB"/>
</dbReference>
<dbReference type="FunFam" id="3.40.50.300:FF:000290">
    <property type="entry name" value="Protein-tyrosine sulfotransferase"/>
    <property type="match status" value="1"/>
</dbReference>
<dbReference type="Gene3D" id="3.40.50.300">
    <property type="entry name" value="P-loop containing nucleotide triphosphate hydrolases"/>
    <property type="match status" value="1"/>
</dbReference>
<dbReference type="InterPro" id="IPR027417">
    <property type="entry name" value="P-loop_NTPase"/>
</dbReference>
<dbReference type="InterPro" id="IPR026634">
    <property type="entry name" value="TPST-like"/>
</dbReference>
<dbReference type="PANTHER" id="PTHR12788">
    <property type="entry name" value="PROTEIN-TYROSINE SULFOTRANSFERASE 2"/>
    <property type="match status" value="1"/>
</dbReference>
<dbReference type="PANTHER" id="PTHR12788:SF6">
    <property type="entry name" value="PROTEIN-TYROSINE SULFOTRANSFERASE 2"/>
    <property type="match status" value="1"/>
</dbReference>
<dbReference type="Pfam" id="PF13469">
    <property type="entry name" value="Sulfotransfer_3"/>
    <property type="match status" value="1"/>
</dbReference>
<dbReference type="SUPFAM" id="SSF52540">
    <property type="entry name" value="P-loop containing nucleoside triphosphate hydrolases"/>
    <property type="match status" value="1"/>
</dbReference>
<reference key="1">
    <citation type="journal article" date="2005" name="Genome Biol.">
        <title>Full-length cDNAs from chicken bursal lymphocytes to facilitate gene function analysis.</title>
        <authorList>
            <person name="Caldwell R.B."/>
            <person name="Kierzek A.M."/>
            <person name="Arakawa H."/>
            <person name="Bezzubov Y."/>
            <person name="Zaim J."/>
            <person name="Fiedler P."/>
            <person name="Kutter S."/>
            <person name="Blagodatski A."/>
            <person name="Kostovska D."/>
            <person name="Koter M."/>
            <person name="Plachy J."/>
            <person name="Carninci P."/>
            <person name="Hayashizaki Y."/>
            <person name="Buerstedde J.-M."/>
        </authorList>
    </citation>
    <scope>NUCLEOTIDE SEQUENCE [LARGE SCALE MRNA]</scope>
    <source>
        <strain>CB</strain>
        <tissue>Bursa of Fabricius</tissue>
    </source>
</reference>
<sequence length="371" mass="42042">MRVTMRRVLLAVGSVVALMVTLHLGQQVLECQHVLSKRRHRLMRPENEELVMVDSNHVEYRYSKEMPLIFIGGVPRSGTTLMRAMLDAHPEVRCGEETRIIPRVLAMRQAWSKSGREKMRLDEAGVTDQVLDAAMQAFILEVIAKHGEPARYLCNKDPFTLKSSVYLSRLFPNSKFLLMVRDGRASVHSMITRKVTIAGFDLNCYRDCLTKWNKAIEVMYSQCLEIGRSRCLPVYYEQLVLHPEQSMHAIMKFLGISWSDTVLHHEELIGKPGGVSLSKIERSTDQVIKPVNMEALSKWIGHIPGDVLQDMAHIAPMLARLGYDPYANPPNYGHPDPLVVNNTHRVLKGDYKTPANLKGHLQVTQNTSSSH</sequence>
<keyword id="KW-1015">Disulfide bond</keyword>
<keyword id="KW-0325">Glycoprotein</keyword>
<keyword id="KW-0333">Golgi apparatus</keyword>
<keyword id="KW-0472">Membrane</keyword>
<keyword id="KW-1185">Reference proteome</keyword>
<keyword id="KW-0735">Signal-anchor</keyword>
<keyword id="KW-0808">Transferase</keyword>
<keyword id="KW-0812">Transmembrane</keyword>
<keyword id="KW-1133">Transmembrane helix</keyword>
<organism>
    <name type="scientific">Gallus gallus</name>
    <name type="common">Chicken</name>
    <dbReference type="NCBI Taxonomy" id="9031"/>
    <lineage>
        <taxon>Eukaryota</taxon>
        <taxon>Metazoa</taxon>
        <taxon>Chordata</taxon>
        <taxon>Craniata</taxon>
        <taxon>Vertebrata</taxon>
        <taxon>Euteleostomi</taxon>
        <taxon>Archelosauria</taxon>
        <taxon>Archosauria</taxon>
        <taxon>Dinosauria</taxon>
        <taxon>Saurischia</taxon>
        <taxon>Theropoda</taxon>
        <taxon>Coelurosauria</taxon>
        <taxon>Aves</taxon>
        <taxon>Neognathae</taxon>
        <taxon>Galloanserae</taxon>
        <taxon>Galliformes</taxon>
        <taxon>Phasianidae</taxon>
        <taxon>Phasianinae</taxon>
        <taxon>Gallus</taxon>
    </lineage>
</organism>
<comment type="function">
    <text evidence="2">Catalyzes the O-sulfation of tyrosine residues within acidic motifs of polypeptides, using 3'-phosphoadenylyl sulfate (PAPS) as cosubstrate.</text>
</comment>
<comment type="catalytic activity">
    <reaction evidence="2">
        <text>L-tyrosyl-[protein] + 3'-phosphoadenylyl sulfate = O-sulfo-L-tyrosine-[protein] + adenosine 3',5'-bisphosphate + H(+)</text>
        <dbReference type="Rhea" id="RHEA:16801"/>
        <dbReference type="Rhea" id="RHEA-COMP:10136"/>
        <dbReference type="Rhea" id="RHEA-COMP:11688"/>
        <dbReference type="ChEBI" id="CHEBI:15378"/>
        <dbReference type="ChEBI" id="CHEBI:46858"/>
        <dbReference type="ChEBI" id="CHEBI:58339"/>
        <dbReference type="ChEBI" id="CHEBI:58343"/>
        <dbReference type="ChEBI" id="CHEBI:65286"/>
        <dbReference type="EC" id="2.8.2.20"/>
    </reaction>
</comment>
<comment type="subcellular location">
    <subcellularLocation>
        <location evidence="2">Golgi apparatus membrane</location>
        <topology evidence="2">Single-pass type II membrane protein</topology>
    </subcellularLocation>
</comment>
<comment type="miscellaneous">
    <text evidence="1">Substrate peptides must be flexible in order to adopt an L-shaped conformation in the deep binding cleft.</text>
</comment>
<comment type="similarity">
    <text evidence="4">Belongs to the protein sulfotransferase family.</text>
</comment>
<evidence type="ECO:0000250" key="1"/>
<evidence type="ECO:0000250" key="2">
    <source>
        <dbReference type="UniProtKB" id="O60704"/>
    </source>
</evidence>
<evidence type="ECO:0000255" key="3"/>
<evidence type="ECO:0000305" key="4"/>